<dbReference type="EMBL" id="M16801">
    <property type="protein sequence ID" value="AAA59571.1"/>
    <property type="molecule type" value="mRNA"/>
</dbReference>
<dbReference type="EMBL" id="AJ315514">
    <property type="protein sequence ID" value="CAC67405.1"/>
    <property type="molecule type" value="mRNA"/>
</dbReference>
<dbReference type="EMBL" id="AJ315515">
    <property type="protein sequence ID" value="CAC67406.1"/>
    <property type="molecule type" value="mRNA"/>
</dbReference>
<dbReference type="EMBL" id="EU326312">
    <property type="protein sequence ID" value="ACA05924.1"/>
    <property type="molecule type" value="Genomic_DNA"/>
</dbReference>
<dbReference type="EMBL" id="EU326312">
    <property type="protein sequence ID" value="ACA05925.1"/>
    <property type="molecule type" value="Genomic_DNA"/>
</dbReference>
<dbReference type="EMBL" id="FJ515829">
    <property type="protein sequence ID" value="ACS13716.1"/>
    <property type="molecule type" value="Genomic_DNA"/>
</dbReference>
<dbReference type="EMBL" id="FJ515829">
    <property type="protein sequence ID" value="ACS13717.1"/>
    <property type="molecule type" value="Genomic_DNA"/>
</dbReference>
<dbReference type="EMBL" id="AC069272">
    <property type="status" value="NOT_ANNOTATED_CDS"/>
    <property type="molecule type" value="Genomic_DNA"/>
</dbReference>
<dbReference type="EMBL" id="AC093678">
    <property type="status" value="NOT_ANNOTATED_CDS"/>
    <property type="molecule type" value="Genomic_DNA"/>
</dbReference>
<dbReference type="EMBL" id="AC093881">
    <property type="status" value="NOT_ANNOTATED_CDS"/>
    <property type="molecule type" value="Genomic_DNA"/>
</dbReference>
<dbReference type="EMBL" id="AC104691">
    <property type="status" value="NOT_ANNOTATED_CDS"/>
    <property type="molecule type" value="Genomic_DNA"/>
</dbReference>
<dbReference type="EMBL" id="AC106899">
    <property type="status" value="NOT_ANNOTATED_CDS"/>
    <property type="molecule type" value="Genomic_DNA"/>
</dbReference>
<dbReference type="EMBL" id="BC111758">
    <property type="protein sequence ID" value="AAI11759.1"/>
    <property type="molecule type" value="mRNA"/>
</dbReference>
<dbReference type="EMBL" id="AH006913">
    <property type="protein sequence ID" value="AAC63513.1"/>
    <property type="molecule type" value="Genomic_DNA"/>
</dbReference>
<dbReference type="CCDS" id="CCDS3772.1">
    <molecule id="P08235-1"/>
</dbReference>
<dbReference type="CCDS" id="CCDS54811.1">
    <molecule id="P08235-4"/>
</dbReference>
<dbReference type="PIR" id="A29513">
    <property type="entry name" value="A29513"/>
</dbReference>
<dbReference type="RefSeq" id="NP_000892.2">
    <molecule id="P08235-1"/>
    <property type="nucleotide sequence ID" value="NM_000901.5"/>
</dbReference>
<dbReference type="RefSeq" id="NP_001159576.1">
    <molecule id="P08235-4"/>
    <property type="nucleotide sequence ID" value="NM_001166104.2"/>
</dbReference>
<dbReference type="RefSeq" id="NP_001341748.1">
    <molecule id="P08235-4"/>
    <property type="nucleotide sequence ID" value="NM_001354819.1"/>
</dbReference>
<dbReference type="RefSeq" id="XP_011530277.1">
    <molecule id="P08235-3"/>
    <property type="nucleotide sequence ID" value="XM_011531975.2"/>
</dbReference>
<dbReference type="RefSeq" id="XP_011530278.1">
    <property type="nucleotide sequence ID" value="XM_011531976.2"/>
</dbReference>
<dbReference type="RefSeq" id="XP_011530279.1">
    <property type="nucleotide sequence ID" value="XM_011531977.2"/>
</dbReference>
<dbReference type="RefSeq" id="XP_016863706.1">
    <property type="nucleotide sequence ID" value="XM_017008217.1"/>
</dbReference>
<dbReference type="RefSeq" id="XP_047271662.1">
    <molecule id="P08235-1"/>
    <property type="nucleotide sequence ID" value="XM_047415706.1"/>
</dbReference>
<dbReference type="RefSeq" id="XP_047271663.1">
    <molecule id="P08235-1"/>
    <property type="nucleotide sequence ID" value="XM_047415707.1"/>
</dbReference>
<dbReference type="RefSeq" id="XP_047271664.1">
    <molecule id="P08235-1"/>
    <property type="nucleotide sequence ID" value="XM_047415708.1"/>
</dbReference>
<dbReference type="PDB" id="1Y9R">
    <property type="method" value="X-ray"/>
    <property type="resolution" value="1.96 A"/>
    <property type="chains" value="A/B=731-984"/>
</dbReference>
<dbReference type="PDB" id="1YA3">
    <property type="method" value="X-ray"/>
    <property type="resolution" value="2.34 A"/>
    <property type="chains" value="A/B/C=731-984"/>
</dbReference>
<dbReference type="PDB" id="2A3I">
    <property type="method" value="X-ray"/>
    <property type="resolution" value="1.95 A"/>
    <property type="chains" value="A=732-984"/>
</dbReference>
<dbReference type="PDB" id="2AA2">
    <property type="method" value="X-ray"/>
    <property type="resolution" value="1.95 A"/>
    <property type="chains" value="A=712-984"/>
</dbReference>
<dbReference type="PDB" id="2AA5">
    <property type="method" value="X-ray"/>
    <property type="resolution" value="2.20 A"/>
    <property type="chains" value="A/B=712-984"/>
</dbReference>
<dbReference type="PDB" id="2AA6">
    <property type="method" value="X-ray"/>
    <property type="resolution" value="1.95 A"/>
    <property type="chains" value="A/B=712-984"/>
</dbReference>
<dbReference type="PDB" id="2AA7">
    <property type="method" value="X-ray"/>
    <property type="resolution" value="2.20 A"/>
    <property type="chains" value="A=712-984"/>
</dbReference>
<dbReference type="PDB" id="2AAX">
    <property type="method" value="X-ray"/>
    <property type="resolution" value="1.75 A"/>
    <property type="chains" value="A/B=712-984"/>
</dbReference>
<dbReference type="PDB" id="2AB2">
    <property type="method" value="X-ray"/>
    <property type="resolution" value="1.85 A"/>
    <property type="chains" value="A/B=712-984"/>
</dbReference>
<dbReference type="PDB" id="2ABI">
    <property type="method" value="X-ray"/>
    <property type="resolution" value="2.33 A"/>
    <property type="chains" value="A/B/C=731-984"/>
</dbReference>
<dbReference type="PDB" id="2OAX">
    <property type="method" value="X-ray"/>
    <property type="resolution" value="2.29 A"/>
    <property type="chains" value="A/B/C/D/E/F=731-984"/>
</dbReference>
<dbReference type="PDB" id="3VHU">
    <property type="method" value="X-ray"/>
    <property type="resolution" value="2.11 A"/>
    <property type="chains" value="A=712-984"/>
</dbReference>
<dbReference type="PDB" id="3VHV">
    <property type="method" value="X-ray"/>
    <property type="resolution" value="1.35 A"/>
    <property type="chains" value="A=727-984"/>
</dbReference>
<dbReference type="PDB" id="3WFF">
    <property type="method" value="X-ray"/>
    <property type="resolution" value="2.05 A"/>
    <property type="chains" value="A=712-984"/>
</dbReference>
<dbReference type="PDB" id="3WFG">
    <property type="method" value="X-ray"/>
    <property type="resolution" value="1.40 A"/>
    <property type="chains" value="A=712-984"/>
</dbReference>
<dbReference type="PDB" id="4PF3">
    <property type="method" value="X-ray"/>
    <property type="resolution" value="1.10 A"/>
    <property type="chains" value="A=712-984"/>
</dbReference>
<dbReference type="PDB" id="4TNT">
    <property type="method" value="X-ray"/>
    <property type="resolution" value="2.39 A"/>
    <property type="chains" value="A/B=593-671"/>
</dbReference>
<dbReference type="PDB" id="4UDA">
    <property type="method" value="X-ray"/>
    <property type="resolution" value="2.03 A"/>
    <property type="chains" value="A=735-984"/>
</dbReference>
<dbReference type="PDB" id="4UDB">
    <property type="method" value="X-ray"/>
    <property type="resolution" value="2.36 A"/>
    <property type="chains" value="A=735-984"/>
</dbReference>
<dbReference type="PDB" id="5HCV">
    <property type="method" value="X-ray"/>
    <property type="resolution" value="2.50 A"/>
    <property type="chains" value="A/B/C=732-984"/>
</dbReference>
<dbReference type="PDB" id="5L7E">
    <property type="method" value="X-ray"/>
    <property type="resolution" value="1.86 A"/>
    <property type="chains" value="A=735-984"/>
</dbReference>
<dbReference type="PDB" id="5L7G">
    <property type="method" value="X-ray"/>
    <property type="resolution" value="2.01 A"/>
    <property type="chains" value="A=735-984"/>
</dbReference>
<dbReference type="PDB" id="5L7H">
    <property type="method" value="X-ray"/>
    <property type="resolution" value="1.84 A"/>
    <property type="chains" value="A=735-984"/>
</dbReference>
<dbReference type="PDB" id="5MWP">
    <property type="method" value="X-ray"/>
    <property type="resolution" value="1.82 A"/>
    <property type="chains" value="A=735-984"/>
</dbReference>
<dbReference type="PDB" id="5MWY">
    <property type="method" value="X-ray"/>
    <property type="resolution" value="1.75 A"/>
    <property type="chains" value="A=735-984"/>
</dbReference>
<dbReference type="PDB" id="6GEV">
    <property type="method" value="X-ray"/>
    <property type="resolution" value="1.54 A"/>
    <property type="chains" value="A=735-984"/>
</dbReference>
<dbReference type="PDB" id="6GG8">
    <property type="method" value="X-ray"/>
    <property type="resolution" value="1.80 A"/>
    <property type="chains" value="A=735-984"/>
</dbReference>
<dbReference type="PDB" id="6GGG">
    <property type="method" value="X-ray"/>
    <property type="resolution" value="1.71 A"/>
    <property type="chains" value="A=735-984"/>
</dbReference>
<dbReference type="PDB" id="6L88">
    <property type="method" value="X-ray"/>
    <property type="resolution" value="3.00 A"/>
    <property type="chains" value="A/B/C/D=735-984"/>
</dbReference>
<dbReference type="PDBsum" id="1Y9R"/>
<dbReference type="PDBsum" id="1YA3"/>
<dbReference type="PDBsum" id="2A3I"/>
<dbReference type="PDBsum" id="2AA2"/>
<dbReference type="PDBsum" id="2AA5"/>
<dbReference type="PDBsum" id="2AA6"/>
<dbReference type="PDBsum" id="2AA7"/>
<dbReference type="PDBsum" id="2AAX"/>
<dbReference type="PDBsum" id="2AB2"/>
<dbReference type="PDBsum" id="2ABI"/>
<dbReference type="PDBsum" id="2OAX"/>
<dbReference type="PDBsum" id="3VHU"/>
<dbReference type="PDBsum" id="3VHV"/>
<dbReference type="PDBsum" id="3WFF"/>
<dbReference type="PDBsum" id="3WFG"/>
<dbReference type="PDBsum" id="4PF3"/>
<dbReference type="PDBsum" id="4TNT"/>
<dbReference type="PDBsum" id="4UDA"/>
<dbReference type="PDBsum" id="4UDB"/>
<dbReference type="PDBsum" id="5HCV"/>
<dbReference type="PDBsum" id="5L7E"/>
<dbReference type="PDBsum" id="5L7G"/>
<dbReference type="PDBsum" id="5L7H"/>
<dbReference type="PDBsum" id="5MWP"/>
<dbReference type="PDBsum" id="5MWY"/>
<dbReference type="PDBsum" id="6GEV"/>
<dbReference type="PDBsum" id="6GG8"/>
<dbReference type="PDBsum" id="6GGG"/>
<dbReference type="PDBsum" id="6L88"/>
<dbReference type="SMR" id="P08235"/>
<dbReference type="BioGRID" id="110451">
    <property type="interactions" value="36"/>
</dbReference>
<dbReference type="CORUM" id="P08235"/>
<dbReference type="FunCoup" id="P08235">
    <property type="interactions" value="1375"/>
</dbReference>
<dbReference type="IntAct" id="P08235">
    <property type="interactions" value="8"/>
</dbReference>
<dbReference type="STRING" id="9606.ENSP00000350815"/>
<dbReference type="BindingDB" id="P08235"/>
<dbReference type="ChEMBL" id="CHEMBL1994"/>
<dbReference type="DrugBank" id="DB04630">
    <property type="generic name" value="Aldosterone"/>
</dbReference>
<dbReference type="DrugBank" id="DB01013">
    <property type="generic name" value="Clobetasol propionate"/>
</dbReference>
<dbReference type="DrugBank" id="DB04652">
    <property type="generic name" value="Corticosterone"/>
</dbReference>
<dbReference type="DrugBank" id="DB06780">
    <property type="generic name" value="Desoxycorticosterone acetate"/>
</dbReference>
<dbReference type="DrugBank" id="DB01134">
    <property type="generic name" value="Desoxycorticosterone pivalate"/>
</dbReference>
<dbReference type="DrugBank" id="DB01395">
    <property type="generic name" value="Drospirenone"/>
</dbReference>
<dbReference type="DrugBank" id="DB00700">
    <property type="generic name" value="Eplerenone"/>
</dbReference>
<dbReference type="DrugBank" id="DB01023">
    <property type="generic name" value="Felodipine"/>
</dbReference>
<dbReference type="DrugBank" id="DB16165">
    <property type="generic name" value="Finerenone"/>
</dbReference>
<dbReference type="DrugBank" id="DB00687">
    <property type="generic name" value="Fludrocortisone"/>
</dbReference>
<dbReference type="DrugBank" id="DB13867">
    <property type="generic name" value="Fluticasone"/>
</dbReference>
<dbReference type="DrugBank" id="DB08906">
    <property type="generic name" value="Fluticasone furoate"/>
</dbReference>
<dbReference type="DrugBank" id="DB00588">
    <property type="generic name" value="Fluticasone propionate"/>
</dbReference>
<dbReference type="DrugBank" id="DB15367">
    <property type="generic name" value="LY-2623091"/>
</dbReference>
<dbReference type="DrugBank" id="DB02998">
    <property type="generic name" value="Metribolone"/>
</dbReference>
<dbReference type="DrugBank" id="DB00393">
    <property type="generic name" value="Nimodipine"/>
</dbReference>
<dbReference type="DrugBank" id="DB11814">
    <property type="generic name" value="PF-03882845"/>
</dbReference>
<dbReference type="DrugBank" id="DB00396">
    <property type="generic name" value="Progesterone"/>
</dbReference>
<dbReference type="DrugBank" id="DB00421">
    <property type="generic name" value="Spironolactone"/>
</dbReference>
<dbReference type="DrugBank" id="DB02901">
    <property type="generic name" value="Stanolone"/>
</dbReference>
<dbReference type="DrugBank" id="DB13951">
    <property type="generic name" value="Stanolone acetate"/>
</dbReference>
<dbReference type="DrugBank" id="DB00624">
    <property type="generic name" value="Testosterone"/>
</dbReference>
<dbReference type="DrugBank" id="DB13943">
    <property type="generic name" value="Testosterone cypionate"/>
</dbReference>
<dbReference type="DrugBank" id="DB13944">
    <property type="generic name" value="Testosterone enanthate"/>
</dbReference>
<dbReference type="DrugBank" id="DB15114">
    <property type="generic name" value="Vamorolone"/>
</dbReference>
<dbReference type="DrugCentral" id="P08235"/>
<dbReference type="GuidetoPHARMACOLOGY" id="626"/>
<dbReference type="GlyGen" id="P08235">
    <property type="glycosylation" value="5 sites, 1 O-linked glycan (5 sites)"/>
</dbReference>
<dbReference type="iPTMnet" id="P08235"/>
<dbReference type="PhosphoSitePlus" id="P08235"/>
<dbReference type="BioMuta" id="NR3C2"/>
<dbReference type="DMDM" id="126885"/>
<dbReference type="jPOST" id="P08235"/>
<dbReference type="MassIVE" id="P08235"/>
<dbReference type="PaxDb" id="9606-ENSP00000350815"/>
<dbReference type="PeptideAtlas" id="P08235"/>
<dbReference type="ProteomicsDB" id="2889"/>
<dbReference type="ProteomicsDB" id="2891"/>
<dbReference type="ProteomicsDB" id="52088">
    <molecule id="P08235-1"/>
</dbReference>
<dbReference type="ProteomicsDB" id="52089">
    <molecule id="P08235-2"/>
</dbReference>
<dbReference type="ProteomicsDB" id="52090">
    <molecule id="P08235-3"/>
</dbReference>
<dbReference type="ProteomicsDB" id="52091">
    <molecule id="P08235-4"/>
</dbReference>
<dbReference type="Antibodypedia" id="3971">
    <property type="antibodies" value="302 antibodies from 34 providers"/>
</dbReference>
<dbReference type="DNASU" id="4306"/>
<dbReference type="Ensembl" id="ENST00000342437.8">
    <molecule id="P08235-2"/>
    <property type="protein sequence ID" value="ENSP00000343907.4"/>
    <property type="gene ID" value="ENSG00000151623.15"/>
</dbReference>
<dbReference type="Ensembl" id="ENST00000344721.8">
    <molecule id="P08235-1"/>
    <property type="protein sequence ID" value="ENSP00000341390.4"/>
    <property type="gene ID" value="ENSG00000151623.15"/>
</dbReference>
<dbReference type="Ensembl" id="ENST00000358102.8">
    <molecule id="P08235-1"/>
    <property type="protein sequence ID" value="ENSP00000350815.3"/>
    <property type="gene ID" value="ENSG00000151623.15"/>
</dbReference>
<dbReference type="Ensembl" id="ENST00000511528.1">
    <molecule id="P08235-3"/>
    <property type="protein sequence ID" value="ENSP00000421481.1"/>
    <property type="gene ID" value="ENSG00000151623.15"/>
</dbReference>
<dbReference type="Ensembl" id="ENST00000512865.5">
    <molecule id="P08235-4"/>
    <property type="protein sequence ID" value="ENSP00000423510.1"/>
    <property type="gene ID" value="ENSG00000151623.15"/>
</dbReference>
<dbReference type="Ensembl" id="ENST00000625323.2">
    <molecule id="P08235-3"/>
    <property type="protein sequence ID" value="ENSP00000486719.1"/>
    <property type="gene ID" value="ENSG00000151623.15"/>
</dbReference>
<dbReference type="GeneID" id="4306"/>
<dbReference type="KEGG" id="hsa:4306"/>
<dbReference type="MANE-Select" id="ENST00000358102.8">
    <property type="protein sequence ID" value="ENSP00000350815.3"/>
    <property type="RefSeq nucleotide sequence ID" value="NM_000901.5"/>
    <property type="RefSeq protein sequence ID" value="NP_000892.2"/>
</dbReference>
<dbReference type="UCSC" id="uc003ilk.5">
    <molecule id="P08235-1"/>
    <property type="organism name" value="human"/>
</dbReference>
<dbReference type="AGR" id="HGNC:7979"/>
<dbReference type="CTD" id="4306"/>
<dbReference type="DisGeNET" id="4306"/>
<dbReference type="GeneCards" id="NR3C2"/>
<dbReference type="HGNC" id="HGNC:7979">
    <property type="gene designation" value="NR3C2"/>
</dbReference>
<dbReference type="HPA" id="ENSG00000151623">
    <property type="expression patterns" value="Low tissue specificity"/>
</dbReference>
<dbReference type="MalaCards" id="NR3C2"/>
<dbReference type="MIM" id="177735">
    <property type="type" value="phenotype"/>
</dbReference>
<dbReference type="MIM" id="600983">
    <property type="type" value="gene"/>
</dbReference>
<dbReference type="MIM" id="605115">
    <property type="type" value="phenotype"/>
</dbReference>
<dbReference type="neXtProt" id="NX_P08235"/>
<dbReference type="OpenTargets" id="ENSG00000151623"/>
<dbReference type="Orphanet" id="171871">
    <property type="disease" value="Renal pseudohypoaldosteronism type 1"/>
</dbReference>
<dbReference type="PharmGKB" id="PA242"/>
<dbReference type="VEuPathDB" id="HostDB:ENSG00000151623"/>
<dbReference type="eggNOG" id="KOG3575">
    <property type="taxonomic scope" value="Eukaryota"/>
</dbReference>
<dbReference type="GeneTree" id="ENSGT00940000159333"/>
<dbReference type="InParanoid" id="P08235"/>
<dbReference type="OMA" id="ITFPKME"/>
<dbReference type="OrthoDB" id="5789523at2759"/>
<dbReference type="PAN-GO" id="P08235">
    <property type="GO annotations" value="4 GO annotations based on evolutionary models"/>
</dbReference>
<dbReference type="PhylomeDB" id="P08235"/>
<dbReference type="PathwayCommons" id="P08235"/>
<dbReference type="Reactome" id="R-HSA-3371497">
    <property type="pathway name" value="HSP90 chaperone cycle for steroid hormone receptors (SHR) in the presence of ligand"/>
</dbReference>
<dbReference type="Reactome" id="R-HSA-383280">
    <property type="pathway name" value="Nuclear Receptor transcription pathway"/>
</dbReference>
<dbReference type="Reactome" id="R-HSA-4090294">
    <property type="pathway name" value="SUMOylation of intracellular receptors"/>
</dbReference>
<dbReference type="SignaLink" id="P08235"/>
<dbReference type="SIGNOR" id="P08235"/>
<dbReference type="BioGRID-ORCS" id="4306">
    <property type="hits" value="15 hits in 1186 CRISPR screens"/>
</dbReference>
<dbReference type="ChiTaRS" id="NR3C2">
    <property type="organism name" value="human"/>
</dbReference>
<dbReference type="EvolutionaryTrace" id="P08235"/>
<dbReference type="GeneWiki" id="Mineralocorticoid_receptor"/>
<dbReference type="GenomeRNAi" id="4306"/>
<dbReference type="Pharos" id="P08235">
    <property type="development level" value="Tclin"/>
</dbReference>
<dbReference type="PRO" id="PR:P08235"/>
<dbReference type="Proteomes" id="UP000005640">
    <property type="component" value="Chromosome 4"/>
</dbReference>
<dbReference type="RNAct" id="P08235">
    <property type="molecule type" value="protein"/>
</dbReference>
<dbReference type="Bgee" id="ENSG00000151623">
    <property type="expression patterns" value="Expressed in endothelial cell and 197 other cell types or tissues"/>
</dbReference>
<dbReference type="ExpressionAtlas" id="P08235">
    <property type="expression patterns" value="baseline and differential"/>
</dbReference>
<dbReference type="GO" id="GO:0000785">
    <property type="term" value="C:chromatin"/>
    <property type="evidence" value="ECO:0000247"/>
    <property type="project" value="NTNU_SB"/>
</dbReference>
<dbReference type="GO" id="GO:0005829">
    <property type="term" value="C:cytosol"/>
    <property type="evidence" value="ECO:0000304"/>
    <property type="project" value="Reactome"/>
</dbReference>
<dbReference type="GO" id="GO:0005789">
    <property type="term" value="C:endoplasmic reticulum membrane"/>
    <property type="evidence" value="ECO:0007669"/>
    <property type="project" value="UniProtKB-SubCell"/>
</dbReference>
<dbReference type="GO" id="GO:0005654">
    <property type="term" value="C:nucleoplasm"/>
    <property type="evidence" value="ECO:0000314"/>
    <property type="project" value="HPA"/>
</dbReference>
<dbReference type="GO" id="GO:0005634">
    <property type="term" value="C:nucleus"/>
    <property type="evidence" value="ECO:0000318"/>
    <property type="project" value="GO_Central"/>
</dbReference>
<dbReference type="GO" id="GO:0043235">
    <property type="term" value="C:receptor complex"/>
    <property type="evidence" value="ECO:0000314"/>
    <property type="project" value="MGI"/>
</dbReference>
<dbReference type="GO" id="GO:0003700">
    <property type="term" value="F:DNA-binding transcription factor activity"/>
    <property type="evidence" value="ECO:0000304"/>
    <property type="project" value="ProtInc"/>
</dbReference>
<dbReference type="GO" id="GO:0000981">
    <property type="term" value="F:DNA-binding transcription factor activity, RNA polymerase II-specific"/>
    <property type="evidence" value="ECO:0000247"/>
    <property type="project" value="NTNU_SB"/>
</dbReference>
<dbReference type="GO" id="GO:0034056">
    <property type="term" value="F:estrogen response element binding"/>
    <property type="evidence" value="ECO:0000318"/>
    <property type="project" value="GO_Central"/>
</dbReference>
<dbReference type="GO" id="GO:0004879">
    <property type="term" value="F:nuclear receptor activity"/>
    <property type="evidence" value="ECO:0000318"/>
    <property type="project" value="GO_Central"/>
</dbReference>
<dbReference type="GO" id="GO:0003707">
    <property type="term" value="F:nuclear steroid receptor activity"/>
    <property type="evidence" value="ECO:0000304"/>
    <property type="project" value="ProtInc"/>
</dbReference>
<dbReference type="GO" id="GO:1990837">
    <property type="term" value="F:sequence-specific double-stranded DNA binding"/>
    <property type="evidence" value="ECO:0000314"/>
    <property type="project" value="ARUK-UCL"/>
</dbReference>
<dbReference type="GO" id="GO:0005496">
    <property type="term" value="F:steroid binding"/>
    <property type="evidence" value="ECO:0007669"/>
    <property type="project" value="UniProtKB-KW"/>
</dbReference>
<dbReference type="GO" id="GO:0017025">
    <property type="term" value="F:TBP-class protein binding"/>
    <property type="evidence" value="ECO:0000353"/>
    <property type="project" value="DisProt"/>
</dbReference>
<dbReference type="GO" id="GO:0008270">
    <property type="term" value="F:zinc ion binding"/>
    <property type="evidence" value="ECO:0007669"/>
    <property type="project" value="UniProtKB-KW"/>
</dbReference>
<dbReference type="GO" id="GO:0030518">
    <property type="term" value="P:nuclear receptor-mediated steroid hormone signaling pathway"/>
    <property type="evidence" value="ECO:0000318"/>
    <property type="project" value="GO_Central"/>
</dbReference>
<dbReference type="GO" id="GO:1901224">
    <property type="term" value="P:positive regulation of non-canonical NF-kappaB signal transduction"/>
    <property type="evidence" value="ECO:0000315"/>
    <property type="project" value="ARUK-UCL"/>
</dbReference>
<dbReference type="GO" id="GO:0006357">
    <property type="term" value="P:regulation of transcription by RNA polymerase II"/>
    <property type="evidence" value="ECO:0000318"/>
    <property type="project" value="GO_Central"/>
</dbReference>
<dbReference type="GO" id="GO:0007165">
    <property type="term" value="P:signal transduction"/>
    <property type="evidence" value="ECO:0000304"/>
    <property type="project" value="ProtInc"/>
</dbReference>
<dbReference type="CDD" id="cd07172">
    <property type="entry name" value="NR_DBD_GR_PR"/>
    <property type="match status" value="1"/>
</dbReference>
<dbReference type="CDD" id="cd07075">
    <property type="entry name" value="NR_LBD_MR"/>
    <property type="match status" value="1"/>
</dbReference>
<dbReference type="DisProt" id="DP01561"/>
<dbReference type="FunFam" id="1.10.565.10:FF:000004">
    <property type="entry name" value="Androgen receptor variant"/>
    <property type="match status" value="1"/>
</dbReference>
<dbReference type="FunFam" id="3.30.50.10:FF:000029">
    <property type="entry name" value="mineralocorticoid receptor isoform X1"/>
    <property type="match status" value="1"/>
</dbReference>
<dbReference type="Gene3D" id="3.30.50.10">
    <property type="entry name" value="Erythroid Transcription Factor GATA-1, subunit A"/>
    <property type="match status" value="1"/>
</dbReference>
<dbReference type="Gene3D" id="1.10.565.10">
    <property type="entry name" value="Retinoid X Receptor"/>
    <property type="match status" value="1"/>
</dbReference>
<dbReference type="IDEAL" id="IID00702"/>
<dbReference type="InterPro" id="IPR035500">
    <property type="entry name" value="NHR-like_dom_sf"/>
</dbReference>
<dbReference type="InterPro" id="IPR000536">
    <property type="entry name" value="Nucl_hrmn_rcpt_lig-bd"/>
</dbReference>
<dbReference type="InterPro" id="IPR050200">
    <property type="entry name" value="Nuclear_hormone_rcpt_NR3"/>
</dbReference>
<dbReference type="InterPro" id="IPR001628">
    <property type="entry name" value="Znf_hrmn_rcpt"/>
</dbReference>
<dbReference type="InterPro" id="IPR013088">
    <property type="entry name" value="Znf_NHR/GATA"/>
</dbReference>
<dbReference type="PANTHER" id="PTHR48092">
    <property type="entry name" value="KNIRPS-RELATED PROTEIN-RELATED"/>
    <property type="match status" value="1"/>
</dbReference>
<dbReference type="Pfam" id="PF00104">
    <property type="entry name" value="Hormone_recep"/>
    <property type="match status" value="1"/>
</dbReference>
<dbReference type="Pfam" id="PF00105">
    <property type="entry name" value="zf-C4"/>
    <property type="match status" value="1"/>
</dbReference>
<dbReference type="PRINTS" id="PR00047">
    <property type="entry name" value="STROIDFINGER"/>
</dbReference>
<dbReference type="SMART" id="SM00430">
    <property type="entry name" value="HOLI"/>
    <property type="match status" value="1"/>
</dbReference>
<dbReference type="SMART" id="SM00399">
    <property type="entry name" value="ZnF_C4"/>
    <property type="match status" value="1"/>
</dbReference>
<dbReference type="SUPFAM" id="SSF57716">
    <property type="entry name" value="Glucocorticoid receptor-like (DNA-binding domain)"/>
    <property type="match status" value="1"/>
</dbReference>
<dbReference type="SUPFAM" id="SSF48508">
    <property type="entry name" value="Nuclear receptor ligand-binding domain"/>
    <property type="match status" value="1"/>
</dbReference>
<dbReference type="PROSITE" id="PS51843">
    <property type="entry name" value="NR_LBD"/>
    <property type="match status" value="1"/>
</dbReference>
<dbReference type="PROSITE" id="PS00031">
    <property type="entry name" value="NUCLEAR_REC_DBD_1"/>
    <property type="match status" value="1"/>
</dbReference>
<dbReference type="PROSITE" id="PS51030">
    <property type="entry name" value="NUCLEAR_REC_DBD_2"/>
    <property type="match status" value="1"/>
</dbReference>
<comment type="function">
    <text evidence="22">Receptor for both mineralocorticoids (MC) such as aldosterone and glucocorticoids (GC) such as corticosterone or cortisol. Binds to mineralocorticoid response elements (MRE) and transactivates target genes. The effect of MC is to increase ion and water transport and thus raise extracellular fluid volume and blood pressure and lower potassium levels.</text>
</comment>
<comment type="subunit">
    <text evidence="8 10 11 16">Heteromultimeric cytoplasmic complex with HSP90, HSP70, and FKBP4, in the absence of ligand. After ligand binding, it translocates to the nucleus and binds to DNA as a homodimer and as a heterodimer with NR3C1. May interact with HSD11B2 in the absence of ligand. Binds the coactivators NCOA1, NCOA2, TIF1 and NRIP1.</text>
</comment>
<comment type="subcellular location">
    <subcellularLocation>
        <location>Cytoplasm</location>
    </subcellularLocation>
    <subcellularLocation>
        <location>Nucleus</location>
    </subcellularLocation>
    <subcellularLocation>
        <location>Endoplasmic reticulum membrane</location>
        <topology>Peripheral membrane protein</topology>
    </subcellularLocation>
    <text>Cytoplasmic and nuclear in the absence of ligand; nuclear after ligand-binding. When bound to HSD11B2, it is found associated with the endoplasmic reticulum membrane.</text>
</comment>
<comment type="alternative products">
    <event type="alternative splicing"/>
    <isoform>
        <id>P08235-1</id>
        <name>1</name>
        <sequence type="displayed"/>
    </isoform>
    <isoform>
        <id>P08235-2</id>
        <name>2</name>
        <sequence type="described" ref="VSP_007358 VSP_007359"/>
    </isoform>
    <isoform>
        <id>P08235-3</id>
        <name>3</name>
        <sequence type="described" ref="VSP_007357"/>
    </isoform>
    <isoform>
        <id>P08235-4</id>
        <name>4</name>
        <name>Delta</name>
        <sequence type="described" ref="VSP_007360"/>
    </isoform>
    <text>Additional isoforms seem to exist.</text>
</comment>
<comment type="tissue specificity">
    <text evidence="11 23">Ubiquitous. Highly expressed in distal tubules, convoluted tubules and cortical collecting duct in kidney, and in sweat glands. Detected at lower levels in cardiomyocytes, in epidermis and in colon enterocytes.</text>
</comment>
<comment type="domain">
    <text>Composed of three domains: a modulating N-terminal domain, a DNA-binding domain and a C-terminal ligand-binding domain.</text>
</comment>
<comment type="PTM">
    <text evidence="17">Phosphorylated.</text>
</comment>
<comment type="disease" evidence="9 13 18 20">
    <disease id="DI-01224">
        <name>Pseudohypoaldosteronism 1, autosomal dominant</name>
        <acronym>PHA1A</acronym>
        <description>A salt wasting disease resulting from target organ unresponsiveness to mineralocorticoids. PHA1A is a mild form characterized by target organ defects confined to kidney. Patients may present with neonatal renal salt wasting with hyperkalaemic acidosis despite high aldosterone levels. These patients improve with age and usually become asymptomatic without treatment.</description>
        <dbReference type="MIM" id="177735"/>
    </disease>
    <text>The disease is caused by variants affecting the gene represented in this entry.</text>
</comment>
<comment type="disease" evidence="7 14 15">
    <disease id="DI-01513">
        <name>Early-onset hypertension with severe exacerbation in pregnancy</name>
        <acronym>EOHSEP</acronym>
        <description>Inheritance is autosomal dominant. The disease is characterized by the onset of severe hypertension before the age of 20, and by suppression of aldosterone secretion.</description>
        <dbReference type="MIM" id="605115"/>
    </disease>
    <text>The disease is caused by variants affecting the gene represented in this entry.</text>
</comment>
<comment type="miscellaneous">
    <molecule>Isoform 2</molecule>
    <text evidence="27">Lacks steroid-binding activity and acts as ligand-independent transactivator.</text>
</comment>
<comment type="similarity">
    <text evidence="27">Belongs to the nuclear hormone receptor family. NR3 subfamily.</text>
</comment>
<comment type="online information" name="Atlas of Genetics and Cytogenetics in Oncology and Haematology">
    <link uri="https://atlasgeneticsoncology.org/gene/44262/NR3C2"/>
</comment>
<comment type="online information" name="Wikipedia">
    <link uri="https://en.wikipedia.org/wiki/Mineralocorticoid_receptor"/>
    <text>Mineralocorticoid receptor entry</text>
</comment>
<reference key="1">
    <citation type="journal article" date="1987" name="Science">
        <title>Cloning of human mineralocorticoid receptor complementary DNA: structural and functional kinship with the glucocorticoid receptor.</title>
        <authorList>
            <person name="Arriza J.L."/>
            <person name="Weinberger C."/>
            <person name="Cerelli G."/>
            <person name="Glaser T.M."/>
            <person name="Handelin B.L."/>
            <person name="Housman D.E."/>
            <person name="Evans R.M."/>
        </authorList>
    </citation>
    <scope>NUCLEOTIDE SEQUENCE [MRNA] (ISOFORM 1)</scope>
    <scope>FUNCTION</scope>
    <scope>VARIANTS ILE-180 AND ALA-241</scope>
    <source>
        <tissue>Kidney</tissue>
    </source>
</reference>
<reference key="2">
    <citation type="journal article" date="2001" name="Mol. Endocrinol.">
        <title>A new human MR splice variant is a ligand-independent transactivator modulating corticosteroid action.</title>
        <authorList>
            <person name="Zennaro M.-C."/>
            <person name="Souque A."/>
            <person name="Viengchareun S."/>
            <person name="Poisson E."/>
            <person name="Lombes M."/>
        </authorList>
    </citation>
    <scope>NUCLEOTIDE SEQUENCE [MRNA] (ISOFORMS 2 AND 4)</scope>
    <scope>TISSUE SPECIFICITY</scope>
    <scope>INTERACTION WITH NCOA1; TIF1 AND NRIP1</scope>
    <scope>VARIANTS ILE-180 AND ALA-241</scope>
    <source>
        <tissue>Heart</tissue>
    </source>
</reference>
<reference key="3">
    <citation type="submission" date="2008-12" db="EMBL/GenBank/DDBJ databases">
        <authorList>
            <consortium name="NHLBI resequencing and genotyping service (RS&amp;G)"/>
        </authorList>
    </citation>
    <scope>NUCLEOTIDE SEQUENCE [GENOMIC DNA]</scope>
</reference>
<reference key="4">
    <citation type="journal article" date="2005" name="Nature">
        <title>Generation and annotation of the DNA sequences of human chromosomes 2 and 4.</title>
        <authorList>
            <person name="Hillier L.W."/>
            <person name="Graves T.A."/>
            <person name="Fulton R.S."/>
            <person name="Fulton L.A."/>
            <person name="Pepin K.H."/>
            <person name="Minx P."/>
            <person name="Wagner-McPherson C."/>
            <person name="Layman D."/>
            <person name="Wylie K."/>
            <person name="Sekhon M."/>
            <person name="Becker M.C."/>
            <person name="Fewell G.A."/>
            <person name="Delehaunty K.D."/>
            <person name="Miner T.L."/>
            <person name="Nash W.E."/>
            <person name="Kremitzki C."/>
            <person name="Oddy L."/>
            <person name="Du H."/>
            <person name="Sun H."/>
            <person name="Bradshaw-Cordum H."/>
            <person name="Ali J."/>
            <person name="Carter J."/>
            <person name="Cordes M."/>
            <person name="Harris A."/>
            <person name="Isak A."/>
            <person name="van Brunt A."/>
            <person name="Nguyen C."/>
            <person name="Du F."/>
            <person name="Courtney L."/>
            <person name="Kalicki J."/>
            <person name="Ozersky P."/>
            <person name="Abbott S."/>
            <person name="Armstrong J."/>
            <person name="Belter E.A."/>
            <person name="Caruso L."/>
            <person name="Cedroni M."/>
            <person name="Cotton M."/>
            <person name="Davidson T."/>
            <person name="Desai A."/>
            <person name="Elliott G."/>
            <person name="Erb T."/>
            <person name="Fronick C."/>
            <person name="Gaige T."/>
            <person name="Haakenson W."/>
            <person name="Haglund K."/>
            <person name="Holmes A."/>
            <person name="Harkins R."/>
            <person name="Kim K."/>
            <person name="Kruchowski S.S."/>
            <person name="Strong C.M."/>
            <person name="Grewal N."/>
            <person name="Goyea E."/>
            <person name="Hou S."/>
            <person name="Levy A."/>
            <person name="Martinka S."/>
            <person name="Mead K."/>
            <person name="McLellan M.D."/>
            <person name="Meyer R."/>
            <person name="Randall-Maher J."/>
            <person name="Tomlinson C."/>
            <person name="Dauphin-Kohlberg S."/>
            <person name="Kozlowicz-Reilly A."/>
            <person name="Shah N."/>
            <person name="Swearengen-Shahid S."/>
            <person name="Snider J."/>
            <person name="Strong J.T."/>
            <person name="Thompson J."/>
            <person name="Yoakum M."/>
            <person name="Leonard S."/>
            <person name="Pearman C."/>
            <person name="Trani L."/>
            <person name="Radionenko M."/>
            <person name="Waligorski J.E."/>
            <person name="Wang C."/>
            <person name="Rock S.M."/>
            <person name="Tin-Wollam A.-M."/>
            <person name="Maupin R."/>
            <person name="Latreille P."/>
            <person name="Wendl M.C."/>
            <person name="Yang S.-P."/>
            <person name="Pohl C."/>
            <person name="Wallis J.W."/>
            <person name="Spieth J."/>
            <person name="Bieri T.A."/>
            <person name="Berkowicz N."/>
            <person name="Nelson J.O."/>
            <person name="Osborne J."/>
            <person name="Ding L."/>
            <person name="Meyer R."/>
            <person name="Sabo A."/>
            <person name="Shotland Y."/>
            <person name="Sinha P."/>
            <person name="Wohldmann P.E."/>
            <person name="Cook L.L."/>
            <person name="Hickenbotham M.T."/>
            <person name="Eldred J."/>
            <person name="Williams D."/>
            <person name="Jones T.A."/>
            <person name="She X."/>
            <person name="Ciccarelli F.D."/>
            <person name="Izaurralde E."/>
            <person name="Taylor J."/>
            <person name="Schmutz J."/>
            <person name="Myers R.M."/>
            <person name="Cox D.R."/>
            <person name="Huang X."/>
            <person name="McPherson J.D."/>
            <person name="Mardis E.R."/>
            <person name="Clifton S.W."/>
            <person name="Warren W.C."/>
            <person name="Chinwalla A.T."/>
            <person name="Eddy S.R."/>
            <person name="Marra M.A."/>
            <person name="Ovcharenko I."/>
            <person name="Furey T.S."/>
            <person name="Miller W."/>
            <person name="Eichler E.E."/>
            <person name="Bork P."/>
            <person name="Suyama M."/>
            <person name="Torrents D."/>
            <person name="Waterston R.H."/>
            <person name="Wilson R.K."/>
        </authorList>
    </citation>
    <scope>NUCLEOTIDE SEQUENCE [LARGE SCALE GENOMIC DNA]</scope>
</reference>
<reference key="5">
    <citation type="journal article" date="2004" name="Genome Res.">
        <title>The status, quality, and expansion of the NIH full-length cDNA project: the Mammalian Gene Collection (MGC).</title>
        <authorList>
            <consortium name="The MGC Project Team"/>
        </authorList>
    </citation>
    <scope>NUCLEOTIDE SEQUENCE [LARGE SCALE MRNA] (ISOFORM 4)</scope>
    <scope>VARIANT ILE-180</scope>
</reference>
<reference key="6">
    <citation type="journal article" date="1998" name="Nat. Genet.">
        <title>Mutations in the mineralocorticoid receptor gene cause autosomal dominant pseudohypoaldosteronism type I.</title>
        <authorList>
            <person name="Geller D.S."/>
            <person name="Rodriguez-Soriano J."/>
            <person name="Vallo Boado A."/>
            <person name="Schifter S."/>
            <person name="Bayer M."/>
            <person name="Chang S.S."/>
            <person name="Lifton R.P."/>
        </authorList>
    </citation>
    <scope>NUCLEOTIDE SEQUENCE [GENOMIC DNA] OF 545-984</scope>
    <scope>DISEASE</scope>
</reference>
<reference key="7">
    <citation type="journal article" date="1991" name="J. Biol. Chem.">
        <title>Overexpression and characterization of the human mineralocorticoid receptor.</title>
        <authorList>
            <person name="Alnemri E.S."/>
            <person name="Maksymowych A.B."/>
            <person name="Robertson N.M."/>
            <person name="Litwack G."/>
        </authorList>
    </citation>
    <scope>SUBCELLULAR LOCATION</scope>
    <scope>PHOSPHORYLATION</scope>
</reference>
<reference key="8">
    <citation type="journal article" date="1991" name="J. Clin. Endocrinol. Metab.">
        <title>Type I pseudohypoaldosteronism includes two clinically and genetically distinct entities with either renal or multiple target organ defects.</title>
        <authorList>
            <person name="Hanukoglu A."/>
        </authorList>
    </citation>
    <scope>DEFINITION OF DIFFERENT FORMS OF PSEUDOHYPOALDOSTERONISM TYPE 1</scope>
</reference>
<reference key="9">
    <citation type="journal article" date="1995" name="J. Steroid Biochem. Mol. Biol.">
        <title>Identification of a splice variant of the rat and human mineralocorticoid receptor genes.</title>
        <authorList>
            <person name="Bloem L.J."/>
            <person name="Guo C."/>
            <person name="Pratt J.H."/>
        </authorList>
    </citation>
    <scope>IDENTIFICATION (ISOFORM 3)</scope>
    <source>
        <tissue>Leukocyte</tissue>
    </source>
</reference>
<reference key="10">
    <citation type="journal article" date="1997" name="J. Clin. Endocrinol. Metab.">
        <title>Tissue-specific expression of alpha and beta messenger ribonucleic acid isoforms of the human mineralocorticoid receptor in normal and pathological states.</title>
        <authorList>
            <person name="Zennaro M.-C."/>
            <person name="Farman N."/>
            <person name="Bonvalet J.-P."/>
            <person name="Lombes M."/>
        </authorList>
    </citation>
    <scope>TISSUE SPECIFICITY</scope>
</reference>
<reference key="11">
    <citation type="journal article" date="1997" name="Recept. Signal Transduct.">
        <title>The unliganded mineralocorticoid receptor is associated with heat shock proteins 70 and 90 and the immunophilin FKBP-52.</title>
        <authorList>
            <person name="Bruner K.L."/>
            <person name="Derfoul A."/>
            <person name="Robertson N.M."/>
            <person name="Guerriero G."/>
            <person name="Fernandes-Alnemri T."/>
            <person name="Alnemri E.S."/>
            <person name="Litwack G."/>
        </authorList>
    </citation>
    <scope>TERNARY COMPLEX WITH HSP90; HSP70 AND FKBP4</scope>
    <scope>DISSOCIATION UPON ALDOSTERONE BINDING</scope>
</reference>
<reference key="12">
    <citation type="journal article" date="1998" name="Biochemistry">
        <title>Cysteines 849 and 942 of human mineralocorticoid receptor are crucial for steroid binding.</title>
        <authorList>
            <person name="Lupo B."/>
            <person name="Mesnier D."/>
            <person name="Auzou G."/>
        </authorList>
    </citation>
    <scope>MUTAGENESIS OF CYS-808; CYS-849 AND CYS-942</scope>
</reference>
<reference key="13">
    <citation type="journal article" date="2000" name="Kidney Int.">
        <title>Mechanistic aspects of mineralocorticoid receptor activation.</title>
        <authorList>
            <person name="Hellal-Levy C."/>
            <person name="Fagart J."/>
            <person name="Souque A."/>
            <person name="Rafestin-Oblin M.-E."/>
        </authorList>
    </citation>
    <scope>MUTAGENESIS OF ASN-770; GLN-776; ARG-817 AND THR-945</scope>
</reference>
<reference key="14">
    <citation type="journal article" date="2000" name="Mol. Endocrinol.">
        <title>Crucial role of the H11-H12 loop in stabilizing the active conformation of the human mineralocorticoid receptor.</title>
        <authorList>
            <person name="Hellal-Levy C."/>
            <person name="Fagart J."/>
            <person name="Souque A."/>
            <person name="Wurtz J.-M."/>
            <person name="Moras D."/>
            <person name="Rafestin-Oblin M.-E."/>
        </authorList>
    </citation>
    <scope>INTERACTION WITH NCOA1; TIF1 AND NRIP1</scope>
    <scope>MUTAGENESIS OF LEU-952; LYS-953; VAL-954; PHE-956 AND PRO-957</scope>
</reference>
<reference key="15">
    <citation type="journal article" date="2001" name="J. Biol. Chem.">
        <title>The intracellular localization of the mineralocorticoid receptor is regulated by 11beta-hydroxysteroid dehydrogenase type 2.</title>
        <authorList>
            <person name="Odermatt A."/>
            <person name="Arnold P."/>
            <person name="Frey F.J."/>
        </authorList>
    </citation>
    <scope>SUBCELLULAR LOCATION</scope>
    <scope>INTERACTION WITH HSD11B2</scope>
</reference>
<reference key="16">
    <citation type="journal article" date="2008" name="Nat. Med.">
        <title>Modification of mineralocorticoid receptor function by Rac1 GTPase: implication in proteinuric kidney disease.</title>
        <authorList>
            <person name="Shibata S."/>
            <person name="Nagase M."/>
            <person name="Yoshida S."/>
            <person name="Kawarazaki W."/>
            <person name="Kurihara H."/>
            <person name="Tanaka H."/>
            <person name="Miyoshi J."/>
            <person name="Takai Y."/>
            <person name="Fujita T."/>
        </authorList>
    </citation>
    <scope>SUBCELLULAR LOCATION</scope>
</reference>
<reference evidence="30 31 32 33 34 35" key="17">
    <citation type="journal article" date="2005" name="J. Biol. Chem.">
        <title>A ligand-mediated hydrogen bond network required for the activation of the mineralocorticoid receptor.</title>
        <authorList>
            <person name="Bledsoe R.K."/>
            <person name="Madauss K.P."/>
            <person name="Holt J.A."/>
            <person name="Apolito C.J."/>
            <person name="Lambert M.H."/>
            <person name="Pearce K.H."/>
            <person name="Stanley T.B."/>
            <person name="Stewart E.L."/>
            <person name="Trump R.P."/>
            <person name="Willson T.M."/>
            <person name="Williams S.P."/>
        </authorList>
    </citation>
    <scope>X-RAY CRYSTALLOGRAPHY (1.85 ANGSTROMS) OF 712-984 OF MUTANT SER-808 IN COMPLEXES WITH AGONIST AND ANTAGONISTS SUCH AS 11-DEOXYCORTICOSTERONE; ALDOSTERONE AND PROGESTERONE</scope>
    <scope>CHARACTERIZATION OF VARIANT EOHSEP LEU-810</scope>
    <scope>MUTAGENESIS OF SER-767; ASN-770 AND THR-945</scope>
</reference>
<reference key="18">
    <citation type="journal article" date="2005" name="Mol. Cell">
        <title>Structural and biochemical mechanisms for the specificity of hormone binding and coactivator assembly by mineralocorticoid receptor.</title>
        <authorList>
            <person name="Li Y."/>
            <person name="Suino K."/>
            <person name="Daugherty J."/>
            <person name="Xu H.E."/>
        </authorList>
    </citation>
    <scope>X-RAY CRYSTALLOGRAPHY (1.95 ANGSTROMS) OF 732-984 OF MUTANT SER-808 IN COMPLEX WITH STEROID LIGAND AND NCOA2</scope>
    <scope>SUBUNIT</scope>
    <scope>MUTAGENESIS OF LYS-782; LYS-785 AND GLU-796</scope>
</reference>
<reference evidence="28 29" key="19">
    <citation type="journal article" date="2005" name="Nat. Struct. Mol. Biol.">
        <title>Crystal structure of a mutant mineralocorticoid receptor responsible for hypertension.</title>
        <authorList>
            <person name="Fagart J."/>
            <person name="Huyet J."/>
            <person name="Pinon G.M."/>
            <person name="Rochel M."/>
            <person name="Mayer C."/>
            <person name="Rafestin-Oblin M.-E."/>
        </authorList>
    </citation>
    <scope>X-RAY CRYSTALLOGRAPHY (1.96 ANGSTROMS) OF 731-984 OF MUTANT LEU-810 IN COMPLEXES WITH THE STEROID AGONISTS 11-DEOXYCORTICOSTERONE AND PROGESTERONE</scope>
    <scope>CHARACTERIZATION OF VARIANT EOHSEP LEU-810</scope>
    <scope>MUTAGENESIS OF GLN-776 AND ARG-817</scope>
</reference>
<reference evidence="36" key="20">
    <citation type="journal article" date="2014" name="PLoS ONE">
        <title>Crystal structure of the mineralocorticoid receptor DNA binding domain in complex with DNA.</title>
        <authorList>
            <person name="Hudson W.H."/>
            <person name="Youn C."/>
            <person name="Ortlund E.A."/>
        </authorList>
    </citation>
    <scope>X-RAY CRYSTALLOGRAPHY (2.39 ANGSTROMS) OF 593-671 IN COMPLEX WITH DNA AND ZINC</scope>
</reference>
<reference key="21">
    <citation type="journal article" date="1999" name="Nat. Genet.">
        <title>Patterns of single-nucleotide polymorphisms in candidate genes for blood-pressure homeostasis.</title>
        <authorList>
            <person name="Halushka M.K."/>
            <person name="Fan J.-B."/>
            <person name="Bentley K."/>
            <person name="Hsie L."/>
            <person name="Shen N."/>
            <person name="Weder A."/>
            <person name="Cooper R."/>
            <person name="Lipshutz R."/>
            <person name="Chakravarti A."/>
        </authorList>
    </citation>
    <scope>VARIANTS ILE-180; THR-444; GLN-537 AND SER-554</scope>
</reference>
<reference key="22">
    <citation type="journal article" date="2000" name="J. Clin. Endocrinol. Metab.">
        <title>A novel missense mutation of mineralocorticoid receptor gene in one Japanese family with a renal form of pseudohypoaldosteronism type 1.</title>
        <authorList>
            <person name="Tajima T."/>
            <person name="Kitagawa H."/>
            <person name="Yokoya S."/>
            <person name="Tachibana K."/>
            <person name="Adachi M."/>
            <person name="Nakae J."/>
            <person name="Suwa S."/>
            <person name="Katoh S."/>
            <person name="Fujieda K."/>
        </authorList>
    </citation>
    <scope>CHARACTERIZATION OF VARIANT PHA1A PRO-924</scope>
</reference>
<reference key="23">
    <citation type="journal article" date="2000" name="Science">
        <title>Activating mineralocorticoid receptor mutation in hypertension exacerbated by pregnancy.</title>
        <authorList>
            <person name="Geller D.S."/>
            <person name="Farhi A."/>
            <person name="Pinkerton N."/>
            <person name="Fradley M."/>
            <person name="Moritz M."/>
            <person name="Spitzer A."/>
            <person name="Meinke G."/>
            <person name="Tsai F.T.F."/>
            <person name="Sigler P.B."/>
            <person name="Lifton R.P."/>
        </authorList>
    </citation>
    <scope>VARIANT EOHSEP LEU-810</scope>
    <scope>MUTAGENESIS OF SER-810</scope>
</reference>
<reference key="24">
    <citation type="journal article" date="2003" name="Hum. Genet.">
        <title>Functional polymorphisms in the mineralocorticoid receptor and amirolide-sensitive sodium channel genes in a patient with sporadic pseudohypoaldosteronism.</title>
        <authorList>
            <person name="Arai K."/>
            <person name="Nakagomi Y."/>
            <person name="Iketani M."/>
            <person name="Shimura Y."/>
            <person name="Amemiya S."/>
            <person name="Ohyama K."/>
            <person name="Shibasaki T."/>
        </authorList>
    </citation>
    <scope>CHARACTERIZATION OF VARIANTS ILE-180 AND ALA-241</scope>
</reference>
<reference key="25">
    <citation type="journal article" date="2003" name="J. Clin. Endocrinol. Metab.">
        <title>Different inactivating mutations of the mineralocorticoid receptor in fourteen families affected by type I pseudohypoaldosteronism.</title>
        <authorList>
            <person name="Sartorato P."/>
            <person name="Lapeyraque A.-L."/>
            <person name="Armanini D."/>
            <person name="Kuhnle U."/>
            <person name="Khaldi Y."/>
            <person name="Salomon R."/>
            <person name="Abadie V."/>
            <person name="Di Battista E."/>
            <person name="Naselli A."/>
            <person name="Racine A."/>
            <person name="Bosio M."/>
            <person name="Caprio M."/>
            <person name="Poulet-Young V."/>
            <person name="Chabrolle J.-P."/>
            <person name="Niaudet P."/>
            <person name="De Gennes C."/>
            <person name="Lecornec M.-H."/>
            <person name="Poisson E."/>
            <person name="Fusco A.M."/>
            <person name="Loli P."/>
            <person name="Lombes M."/>
            <person name="Zennaro M.-C."/>
        </authorList>
    </citation>
    <scope>CHARACTERIZATION OF VARIANTS PHA1A ARG-633; ARG-776; PRO-924 AND PRO-979</scope>
</reference>
<reference key="26">
    <citation type="journal article" date="2006" name="J. Clin. Endocrinol. Metab.">
        <title>Elucidating the underlying molecular pathogenesis of NR3C2 mutants causing autosomal dominant pseudohypoaldosteronism type 1.</title>
        <authorList>
            <person name="Riepe F.G."/>
            <person name="Finkeldei J."/>
            <person name="de Sanctis L."/>
            <person name="Einaudi S."/>
            <person name="Testa A."/>
            <person name="Karges B."/>
            <person name="Peter M."/>
            <person name="Viemann M."/>
            <person name="Groetzinger J."/>
            <person name="Sippell W.G."/>
            <person name="Fejes-Toth G."/>
            <person name="Krone N."/>
        </authorList>
    </citation>
    <scope>CHARACTERIZATION OF VARIANTS PHA1A LEU-818 AND GLY-972</scope>
</reference>
<reference key="27">
    <citation type="journal article" date="2006" name="Science">
        <title>The consensus coding sequences of human breast and colorectal cancers.</title>
        <authorList>
            <person name="Sjoeblom T."/>
            <person name="Jones S."/>
            <person name="Wood L.D."/>
            <person name="Parsons D.W."/>
            <person name="Lin J."/>
            <person name="Barber T.D."/>
            <person name="Mandelker D."/>
            <person name="Leary R.J."/>
            <person name="Ptak J."/>
            <person name="Silliman N."/>
            <person name="Szabo S."/>
            <person name="Buckhaults P."/>
            <person name="Farrell C."/>
            <person name="Meeh P."/>
            <person name="Markowitz S.D."/>
            <person name="Willis J."/>
            <person name="Dawson D."/>
            <person name="Willson J.K.V."/>
            <person name="Gazdar A.F."/>
            <person name="Hartigan J."/>
            <person name="Wu L."/>
            <person name="Liu C."/>
            <person name="Parmigiani G."/>
            <person name="Park B.H."/>
            <person name="Bachman K.E."/>
            <person name="Papadopoulos N."/>
            <person name="Vogelstein B."/>
            <person name="Kinzler K.W."/>
            <person name="Velculescu V.E."/>
        </authorList>
    </citation>
    <scope>VARIANT [LARGE SCALE ANALYSIS] GLN-7</scope>
</reference>
<reference key="28">
    <citation type="journal article" date="2007" name="Hum. Mutat.">
        <title>Mineralocorticoid receptor mutations are the principal cause of renal type 1 pseudohypoaldosteronism.</title>
        <authorList>
            <person name="Pujo L."/>
            <person name="Fagart J."/>
            <person name="Gary F."/>
            <person name="Papadimitriou D.T."/>
            <person name="Claes A."/>
            <person name="Jeunemaitre X."/>
            <person name="Zennaro M.-C."/>
        </authorList>
    </citation>
    <scope>VARIANTS PHA1A SER-645; SER-659; SER-759; PRO-769; LYS-770; PRO-805 AND ARG-815</scope>
</reference>
<protein>
    <recommendedName>
        <fullName>Mineralocorticoid receptor</fullName>
        <shortName>MR</shortName>
    </recommendedName>
    <alternativeName>
        <fullName>Nuclear receptor subfamily 3 group C member 2</fullName>
    </alternativeName>
</protein>
<feature type="chain" id="PRO_0000053682" description="Mineralocorticoid receptor">
    <location>
        <begin position="1"/>
        <end position="984"/>
    </location>
</feature>
<feature type="domain" description="NR LBD" evidence="3">
    <location>
        <begin position="726"/>
        <end position="964"/>
    </location>
</feature>
<feature type="DNA-binding region" description="Nuclear receptor" evidence="2">
    <location>
        <begin position="603"/>
        <end position="668"/>
    </location>
</feature>
<feature type="zinc finger region" description="NR C4-type" evidence="2">
    <location>
        <begin position="603"/>
        <end position="623"/>
    </location>
</feature>
<feature type="zinc finger region" description="NR C4-type" evidence="2">
    <location>
        <begin position="639"/>
        <end position="663"/>
    </location>
</feature>
<feature type="region of interest" description="Modulating">
    <location>
        <begin position="1"/>
        <end position="602"/>
    </location>
</feature>
<feature type="region of interest" description="Disordered" evidence="4">
    <location>
        <begin position="231"/>
        <end position="329"/>
    </location>
</feature>
<feature type="region of interest" description="Disordered" evidence="4">
    <location>
        <begin position="347"/>
        <end position="373"/>
    </location>
</feature>
<feature type="region of interest" description="Hinge">
    <location>
        <begin position="669"/>
        <end position="725"/>
    </location>
</feature>
<feature type="region of interest" description="Disordered" evidence="4">
    <location>
        <begin position="684"/>
        <end position="710"/>
    </location>
</feature>
<feature type="region of interest" description="Important for coactivator binding">
    <location>
        <begin position="782"/>
        <end position="785"/>
    </location>
</feature>
<feature type="compositionally biased region" description="Polar residues" evidence="4">
    <location>
        <begin position="231"/>
        <end position="243"/>
    </location>
</feature>
<feature type="compositionally biased region" description="Low complexity" evidence="4">
    <location>
        <begin position="259"/>
        <end position="291"/>
    </location>
</feature>
<feature type="compositionally biased region" description="Polar residues" evidence="4">
    <location>
        <begin position="292"/>
        <end position="329"/>
    </location>
</feature>
<feature type="compositionally biased region" description="Pro residues" evidence="4">
    <location>
        <begin position="692"/>
        <end position="703"/>
    </location>
</feature>
<feature type="binding site" evidence="21 36">
    <location>
        <position position="603"/>
    </location>
    <ligand>
        <name>Zn(2+)</name>
        <dbReference type="ChEBI" id="CHEBI:29105"/>
        <label>1</label>
    </ligand>
</feature>
<feature type="binding site" evidence="21 36">
    <location>
        <position position="606"/>
    </location>
    <ligand>
        <name>Zn(2+)</name>
        <dbReference type="ChEBI" id="CHEBI:29105"/>
        <label>1</label>
    </ligand>
</feature>
<feature type="binding site" evidence="21 36">
    <location>
        <position position="620"/>
    </location>
    <ligand>
        <name>Zn(2+)</name>
        <dbReference type="ChEBI" id="CHEBI:29105"/>
        <label>1</label>
    </ligand>
</feature>
<feature type="binding site" evidence="21 36">
    <location>
        <position position="623"/>
    </location>
    <ligand>
        <name>Zn(2+)</name>
        <dbReference type="ChEBI" id="CHEBI:29105"/>
        <label>1</label>
    </ligand>
</feature>
<feature type="binding site" evidence="21 36">
    <location>
        <position position="639"/>
    </location>
    <ligand>
        <name>Zn(2+)</name>
        <dbReference type="ChEBI" id="CHEBI:29105"/>
        <label>2</label>
    </ligand>
</feature>
<feature type="binding site" evidence="21 36">
    <location>
        <position position="645"/>
    </location>
    <ligand>
        <name>Zn(2+)</name>
        <dbReference type="ChEBI" id="CHEBI:29105"/>
        <label>2</label>
    </ligand>
</feature>
<feature type="binding site" evidence="21 36">
    <location>
        <position position="655"/>
    </location>
    <ligand>
        <name>Zn(2+)</name>
        <dbReference type="ChEBI" id="CHEBI:29105"/>
        <label>2</label>
    </ligand>
</feature>
<feature type="binding site" evidence="21 36">
    <location>
        <position position="658"/>
    </location>
    <ligand>
        <name>Zn(2+)</name>
        <dbReference type="ChEBI" id="CHEBI:29105"/>
        <label>2</label>
    </ligand>
</feature>
<feature type="binding site" evidence="14 15 28 33">
    <location>
        <position position="770"/>
    </location>
    <ligand>
        <name>21-hydroxyprogesterone</name>
        <dbReference type="ChEBI" id="CHEBI:16973"/>
    </ligand>
</feature>
<feature type="binding site" evidence="15 30">
    <location>
        <position position="770"/>
    </location>
    <ligand>
        <name>aldosterone</name>
        <dbReference type="ChEBI" id="CHEBI:27584"/>
    </ligand>
</feature>
<feature type="binding site" evidence="14 15 29 31 32">
    <location>
        <position position="770"/>
    </location>
    <ligand>
        <name>progesterone</name>
        <dbReference type="ChEBI" id="CHEBI:17026"/>
    </ligand>
</feature>
<feature type="binding site" evidence="14 15 28 33">
    <location>
        <position position="776"/>
    </location>
    <ligand>
        <name>21-hydroxyprogesterone</name>
        <dbReference type="ChEBI" id="CHEBI:16973"/>
    </ligand>
</feature>
<feature type="binding site" evidence="15 30">
    <location>
        <position position="776"/>
    </location>
    <ligand>
        <name>aldosterone</name>
        <dbReference type="ChEBI" id="CHEBI:27584"/>
    </ligand>
</feature>
<feature type="binding site" evidence="14 15 29 31 32">
    <location>
        <position position="776"/>
    </location>
    <ligand>
        <name>progesterone</name>
        <dbReference type="ChEBI" id="CHEBI:17026"/>
    </ligand>
</feature>
<feature type="binding site" evidence="14 15 28 33">
    <location>
        <position position="817"/>
    </location>
    <ligand>
        <name>21-hydroxyprogesterone</name>
        <dbReference type="ChEBI" id="CHEBI:16973"/>
    </ligand>
</feature>
<feature type="binding site" evidence="15 30">
    <location>
        <position position="817"/>
    </location>
    <ligand>
        <name>aldosterone</name>
        <dbReference type="ChEBI" id="CHEBI:27584"/>
    </ligand>
</feature>
<feature type="binding site" evidence="14 15 29 31 32">
    <location>
        <position position="817"/>
    </location>
    <ligand>
        <name>progesterone</name>
        <dbReference type="ChEBI" id="CHEBI:17026"/>
    </ligand>
</feature>
<feature type="binding site" evidence="14 15 28 33">
    <location>
        <position position="945"/>
    </location>
    <ligand>
        <name>21-hydroxyprogesterone</name>
        <dbReference type="ChEBI" id="CHEBI:16973"/>
    </ligand>
</feature>
<feature type="binding site" evidence="15 30">
    <location>
        <position position="945"/>
    </location>
    <ligand>
        <name>aldosterone</name>
        <dbReference type="ChEBI" id="CHEBI:27584"/>
    </ligand>
</feature>
<feature type="binding site" evidence="15 31 32">
    <location>
        <position position="945"/>
    </location>
    <ligand>
        <name>progesterone</name>
        <dbReference type="ChEBI" id="CHEBI:17026"/>
    </ligand>
</feature>
<feature type="modified residue" description="Phosphoserine" evidence="1">
    <location>
        <position position="250"/>
    </location>
</feature>
<feature type="modified residue" description="Phosphoserine" evidence="1">
    <location>
        <position position="259"/>
    </location>
</feature>
<feature type="modified residue" description="Phosphoserine" evidence="1">
    <location>
        <position position="283"/>
    </location>
</feature>
<feature type="modified residue" description="Phosphoserine" evidence="1">
    <location>
        <position position="287"/>
    </location>
</feature>
<feature type="modified residue" description="Phosphoserine" evidence="1">
    <location>
        <position position="299"/>
    </location>
</feature>
<feature type="splice variant" id="VSP_007357" description="In isoform 3." evidence="27">
    <original>G</original>
    <variation>GKCSW</variation>
    <location>
        <position position="633"/>
    </location>
</feature>
<feature type="splice variant" id="VSP_007360" description="In isoform 4." evidence="25 26">
    <location>
        <begin position="672"/>
        <end position="788"/>
    </location>
</feature>
<feature type="splice variant" id="VSP_007358" description="In isoform 2." evidence="25">
    <original>ARKSKKLGKLKGIHEEQPQQQQPPPPPPPPQSPEE</original>
    <variation>ERRCISLPCMNYARGCTKSAFSSFDCSSPLKNTPS</variation>
    <location>
        <begin position="672"/>
        <end position="706"/>
    </location>
</feature>
<feature type="splice variant" id="VSP_007359" description="In isoform 2." evidence="25">
    <location>
        <begin position="707"/>
        <end position="984"/>
    </location>
</feature>
<feature type="sequence variant" id="VAR_036063" description="In a colorectal cancer sample; somatic mutation." evidence="19">
    <original>H</original>
    <variation>Q</variation>
    <location>
        <position position="7"/>
    </location>
</feature>
<feature type="sequence variant" id="VAR_014623" description="Decreased mineralocorticoid receptor activity; dbSNP:rs5522." evidence="5 11 12">
    <original>V</original>
    <variation>I</variation>
    <location>
        <position position="180"/>
    </location>
</feature>
<feature type="sequence variant" id="VAR_015625" description="Changed mineralocorticoid receptor activity; changed response curve to aldosterone stimulation." evidence="11 12">
    <original>V</original>
    <variation>A</variation>
    <location>
        <position position="241"/>
    </location>
</feature>
<feature type="sequence variant" id="VAR_014624" description="In dbSNP:rs5523." evidence="5">
    <original>N</original>
    <variation>T</variation>
    <location>
        <position position="444"/>
    </location>
</feature>
<feature type="sequence variant" id="VAR_014625" description="In dbSNP:rs5526." evidence="5">
    <original>R</original>
    <variation>Q</variation>
    <location>
        <position position="537"/>
    </location>
</feature>
<feature type="sequence variant" id="VAR_014626" description="In dbSNP:rs5527." evidence="5">
    <original>N</original>
    <variation>S</variation>
    <location>
        <position position="554"/>
    </location>
</feature>
<feature type="sequence variant" id="VAR_031268" description="In PHA1A; reduces transcription transactivation upon aldosterone binding; dbSNP:rs121912566." evidence="13">
    <original>G</original>
    <variation>R</variation>
    <location>
        <position position="633"/>
    </location>
</feature>
<feature type="sequence variant" id="VAR_031269" description="In PHA1A." evidence="20">
    <original>C</original>
    <variation>S</variation>
    <location>
        <position position="645"/>
    </location>
</feature>
<feature type="sequence variant" id="VAR_031270" description="In PHA1A." evidence="20">
    <original>R</original>
    <variation>S</variation>
    <location>
        <position position="659"/>
    </location>
</feature>
<feature type="sequence variant" id="VAR_031271" description="In PHA1A." evidence="20">
    <original>P</original>
    <variation>S</variation>
    <location>
        <position position="759"/>
    </location>
</feature>
<feature type="sequence variant" id="VAR_031272" description="In PHA1A." evidence="20">
    <original>L</original>
    <variation>P</variation>
    <location>
        <position position="769"/>
    </location>
</feature>
<feature type="sequence variant" id="VAR_031273" description="In PHA1A." evidence="20">
    <original>N</original>
    <variation>K</variation>
    <location>
        <position position="770"/>
    </location>
</feature>
<feature type="sequence variant" id="VAR_031274" description="In PHA1A; reduces aldosterone binding; dbSNP:rs121912565." evidence="13">
    <original>Q</original>
    <variation>R</variation>
    <location>
        <position position="776"/>
    </location>
</feature>
<feature type="sequence variant" id="VAR_031275" description="In PHA1A." evidence="20">
    <original>S</original>
    <variation>P</variation>
    <location>
        <position position="805"/>
    </location>
</feature>
<feature type="sequence variant" id="VAR_015626" description="In EOHSEP; alters receptor specificity and leads to constitutive activation; dbSNP:rs41511344." evidence="7 14 15">
    <original>S</original>
    <variation>L</variation>
    <location>
        <position position="810"/>
    </location>
</feature>
<feature type="sequence variant" id="VAR_031276" description="In PHA1A." evidence="20">
    <original>S</original>
    <variation>R</variation>
    <location>
        <position position="815"/>
    </location>
</feature>
<feature type="sequence variant" id="VAR_031277" description="In PHA1A; abolishes translocation to the nucleus and transcription transactivation upon aldosterone binding; dbSNP:rs121912573." evidence="18">
    <original>S</original>
    <variation>L</variation>
    <location>
        <position position="818"/>
    </location>
</feature>
<feature type="sequence variant" id="VAR_029311" description="In dbSNP:rs13306592.">
    <original>F</original>
    <variation>Y</variation>
    <location>
        <position position="826"/>
    </location>
</feature>
<feature type="sequence variant" id="VAR_015627" description="In PHA1A; abolishes transcription transactivation upon aldosterone binding; dbSNP:rs121912563." evidence="9 13">
    <original>L</original>
    <variation>P</variation>
    <location>
        <position position="924"/>
    </location>
</feature>
<feature type="sequence variant" id="VAR_031278" description="In PHA1A; reduces affinity for aldosterone and transcription transactivation; dbSNP:rs121912574." evidence="18">
    <original>E</original>
    <variation>G</variation>
    <location>
        <position position="972"/>
    </location>
</feature>
<feature type="sequence variant" id="VAR_031279" description="In PHA1A; loss of aldosterone binding and transcription transactivation; dbSNP:rs121912567." evidence="13">
    <original>L</original>
    <variation>P</variation>
    <location>
        <position position="979"/>
    </location>
</feature>
<feature type="mutagenesis site" description="Loss of transcription transactivation." evidence="15">
    <original>S</original>
    <variation>N</variation>
    <location>
        <position position="767"/>
    </location>
</feature>
<feature type="mutagenesis site" description="Strong decrease of transcription transactivation." evidence="15">
    <original>S</original>
    <variation>Q</variation>
    <location>
        <position position="767"/>
    </location>
</feature>
<feature type="mutagenesis site" description="Abolishes aldosterone binding and transcription transactivation." evidence="6 15">
    <original>N</original>
    <variation>A</variation>
    <variation>D</variation>
    <variation>H</variation>
    <variation>Q</variation>
    <variation>S</variation>
    <variation>T</variation>
    <location>
        <position position="770"/>
    </location>
</feature>
<feature type="mutagenesis site" description="Reduces aldosterone binding and transcription transactivation." evidence="6 14">
    <original>Q</original>
    <variation>A</variation>
    <location>
        <position position="776"/>
    </location>
</feature>
<feature type="mutagenesis site" description="Decreased coactivator binding." evidence="16">
    <original>K</original>
    <variation>E</variation>
    <location>
        <position position="782"/>
    </location>
</feature>
<feature type="mutagenesis site" description="Loss of coactivator binding." evidence="16">
    <original>K</original>
    <variation>E</variation>
    <location>
        <position position="785"/>
    </location>
</feature>
<feature type="mutagenesis site" description="Decreased coactivator binding." evidence="16">
    <original>E</original>
    <variation>R</variation>
    <location>
        <position position="796"/>
    </location>
</feature>
<feature type="mutagenesis site" description="Increases aldosterone-binding." evidence="24">
    <original>C</original>
    <variation>S</variation>
    <location>
        <position position="808"/>
    </location>
</feature>
<feature type="mutagenesis site" description="Alters receptor specificity." evidence="7">
    <original>S</original>
    <variation>M</variation>
    <location>
        <position position="810"/>
    </location>
</feature>
<feature type="mutagenesis site" description="Reduces aldosterone binding and transcription transactivation." evidence="6 14">
    <original>R</original>
    <variation>A</variation>
    <location>
        <position position="817"/>
    </location>
</feature>
<feature type="mutagenesis site" description="Strongly decreases affinity for aldosterone and transcription transactivation." evidence="24">
    <original>C</original>
    <variation>S</variation>
    <location>
        <position position="849"/>
    </location>
</feature>
<feature type="mutagenesis site" description="Abolishes steroid binding and transcription transactivation." evidence="24">
    <original>C</original>
    <variation>S</variation>
    <location>
        <position position="942"/>
    </location>
</feature>
<feature type="mutagenesis site" description="Decreases aldosterone-binding and cortisol-binding." evidence="6 15">
    <original>T</original>
    <variation>A</variation>
    <location>
        <position position="945"/>
    </location>
</feature>
<feature type="mutagenesis site" description="Reduces transcription transactivation." evidence="8">
    <original>L</original>
    <variation>A</variation>
    <location>
        <position position="952"/>
    </location>
</feature>
<feature type="mutagenesis site" description="Slightly reduces aldosterone binding and abolishes transcription transactivation." evidence="8">
    <original>K</original>
    <variation>A</variation>
    <location>
        <position position="953"/>
    </location>
</feature>
<feature type="mutagenesis site" description="Reduces aldosterone binding and abolishes transcription transactivation." evidence="8">
    <original>V</original>
    <variation>A</variation>
    <location>
        <position position="954"/>
    </location>
</feature>
<feature type="mutagenesis site" description="Abolishes aldosterone binding and transcription transactivation." evidence="8">
    <original>F</original>
    <variation>A</variation>
    <location>
        <position position="956"/>
    </location>
</feature>
<feature type="mutagenesis site" description="Slightly reduces aldosterone binding and transcription transactivation." evidence="8">
    <original>P</original>
    <variation>A</variation>
    <location>
        <position position="957"/>
    </location>
</feature>
<feature type="sequence conflict" description="In Ref. 5; AAI11759." evidence="27" ref="5">
    <original>F</original>
    <variation>I</variation>
    <location>
        <position position="946"/>
    </location>
</feature>
<feature type="turn" evidence="39">
    <location>
        <begin position="604"/>
        <end position="606"/>
    </location>
</feature>
<feature type="strand" evidence="39">
    <location>
        <begin position="612"/>
        <end position="614"/>
    </location>
</feature>
<feature type="helix" evidence="39">
    <location>
        <begin position="621"/>
        <end position="632"/>
    </location>
</feature>
<feature type="strand" evidence="39">
    <location>
        <begin position="640"/>
        <end position="643"/>
    </location>
</feature>
<feature type="turn" evidence="39">
    <location>
        <begin position="649"/>
        <end position="654"/>
    </location>
</feature>
<feature type="helix" evidence="39">
    <location>
        <begin position="656"/>
        <end position="665"/>
    </location>
</feature>
<feature type="helix" evidence="37">
    <location>
        <begin position="728"/>
        <end position="733"/>
    </location>
</feature>
<feature type="helix" evidence="38">
    <location>
        <begin position="738"/>
        <end position="745"/>
    </location>
</feature>
<feature type="helix" evidence="38">
    <location>
        <begin position="762"/>
        <end position="785"/>
    </location>
</feature>
<feature type="helix" evidence="38">
    <location>
        <begin position="790"/>
        <end position="792"/>
    </location>
</feature>
<feature type="helix" evidence="38">
    <location>
        <begin position="795"/>
        <end position="822"/>
    </location>
</feature>
<feature type="strand" evidence="38">
    <location>
        <begin position="825"/>
        <end position="830"/>
    </location>
</feature>
<feature type="strand" evidence="38">
    <location>
        <begin position="833"/>
        <end position="835"/>
    </location>
</feature>
<feature type="helix" evidence="38">
    <location>
        <begin position="837"/>
        <end position="842"/>
    </location>
</feature>
<feature type="helix" evidence="38">
    <location>
        <begin position="846"/>
        <end position="862"/>
    </location>
</feature>
<feature type="helix" evidence="38">
    <location>
        <begin position="866"/>
        <end position="877"/>
    </location>
</feature>
<feature type="strand" evidence="38">
    <location>
        <begin position="879"/>
        <end position="881"/>
    </location>
</feature>
<feature type="helix" evidence="38">
    <location>
        <begin position="889"/>
        <end position="909"/>
    </location>
</feature>
<feature type="helix" evidence="38">
    <location>
        <begin position="911"/>
        <end position="913"/>
    </location>
</feature>
<feature type="turn" evidence="40">
    <location>
        <begin position="914"/>
        <end position="916"/>
    </location>
</feature>
<feature type="helix" evidence="38">
    <location>
        <begin position="917"/>
        <end position="947"/>
    </location>
</feature>
<feature type="helix" evidence="38">
    <location>
        <begin position="949"/>
        <end position="952"/>
    </location>
</feature>
<feature type="helix" evidence="38">
    <location>
        <begin position="958"/>
        <end position="972"/>
    </location>
</feature>
<feature type="strand" evidence="37">
    <location>
        <begin position="976"/>
        <end position="978"/>
    </location>
</feature>
<keyword id="KW-0002">3D-structure</keyword>
<keyword id="KW-0025">Alternative splicing</keyword>
<keyword id="KW-0963">Cytoplasm</keyword>
<keyword id="KW-0225">Disease variant</keyword>
<keyword id="KW-0238">DNA-binding</keyword>
<keyword id="KW-0256">Endoplasmic reticulum</keyword>
<keyword id="KW-0446">Lipid-binding</keyword>
<keyword id="KW-0472">Membrane</keyword>
<keyword id="KW-0479">Metal-binding</keyword>
<keyword id="KW-0539">Nucleus</keyword>
<keyword id="KW-0597">Phosphoprotein</keyword>
<keyword id="KW-1267">Proteomics identification</keyword>
<keyword id="KW-0675">Receptor</keyword>
<keyword id="KW-1185">Reference proteome</keyword>
<keyword id="KW-0754">Steroid-binding</keyword>
<keyword id="KW-0804">Transcription</keyword>
<keyword id="KW-0805">Transcription regulation</keyword>
<keyword id="KW-0862">Zinc</keyword>
<keyword id="KW-0863">Zinc-finger</keyword>
<sequence>METKGYHSLPEGLDMERRWGQVSQAVERSSLGPTERTDENNYMEIVNVSCVSGAIPNNSTQGSSKEKQELLPCLQQDNNRPGILTSDIKTELESKELSATVAESMGLYMDSVRDADYSYEQQNQQGSMSPAKIYQNVEQLVKFYKGNGHRPSTLSCVNTPLRSFMSDSGSSVNGGVMRAVVKSPIMCHEKSPSVCSPLNMTSSVCSPAGINSVSSTTASFGSFPVHSPITQGTPLTCSPNVENRGSRSHSPAHASNVGSPLSSPLSSMKSSISSPPSHCSVKSPVSSPNNVTLRSSVSSPANINNSRCSVSSPSNTNNRSTLSSPAASTVGSICSPVNNAFSYTASGTSAGSSTLRDVVPSPDTQEKGAQEVPFPKTEEVESAISNGVTGQLNIVQYIKPEPDGAFSSSCLGGNSKINSDSSFSVPIKQESTKHSCSGTSFKGNPTVNPFPFMDGSYFSFMDDKDYYSLSGILGPPVPGFDGNCEGSGFPVGIKQEPDDGSYYPEASIPSSAIVGVNSGGQSFHYRIGAQGTISLSRSARDQSFQHLSSFPPVNTLVESWKSHGDLSSRRSDGYPVLEYIPENVSSSTLRSVSTGSSRPSKICLVCGDEASGCHYGVVTCGSCKVFFKRAVEGQHNYLCAGRNDCIIDKIRRKNCPACRLQKCLQAGMNLGARKSKKLGKLKGIHEEQPQQQQPPPPPPPPQSPEEGTTYIAPAKEPSVNTALVPQLSTISRALTPSPVMVLENIEPEIVYAGYDSSKPDTAENLLSTLNRLAGKQMIQVVKWAKVLPGFKNLPLEDQITLIQYSWMCLSSFALSWRSYKHTNSQFLYFAPDLVFNEEKMHQSAMYELCQGMHQISLQFVRLQLTFEEYTIMKVLLLLSTIPKDGLKSQAAFEEMRTNYIKELRKMVTKCPNNSGQSWQRFYQLTKLLDSMHDLVSDLLEFCFYTFRESHALKVEFPAMLVEIISDQLPKVESGNAKPLYFHRK</sequence>
<proteinExistence type="evidence at protein level"/>
<evidence type="ECO:0000250" key="1">
    <source>
        <dbReference type="UniProtKB" id="Q8VII8"/>
    </source>
</evidence>
<evidence type="ECO:0000255" key="2">
    <source>
        <dbReference type="PROSITE-ProRule" id="PRU00407"/>
    </source>
</evidence>
<evidence type="ECO:0000255" key="3">
    <source>
        <dbReference type="PROSITE-ProRule" id="PRU01189"/>
    </source>
</evidence>
<evidence type="ECO:0000256" key="4">
    <source>
        <dbReference type="SAM" id="MobiDB-lite"/>
    </source>
</evidence>
<evidence type="ECO:0000269" key="5">
    <source>
    </source>
</evidence>
<evidence type="ECO:0000269" key="6">
    <source>
    </source>
</evidence>
<evidence type="ECO:0000269" key="7">
    <source>
    </source>
</evidence>
<evidence type="ECO:0000269" key="8">
    <source>
    </source>
</evidence>
<evidence type="ECO:0000269" key="9">
    <source>
    </source>
</evidence>
<evidence type="ECO:0000269" key="10">
    <source>
    </source>
</evidence>
<evidence type="ECO:0000269" key="11">
    <source>
    </source>
</evidence>
<evidence type="ECO:0000269" key="12">
    <source>
    </source>
</evidence>
<evidence type="ECO:0000269" key="13">
    <source>
    </source>
</evidence>
<evidence type="ECO:0000269" key="14">
    <source>
    </source>
</evidence>
<evidence type="ECO:0000269" key="15">
    <source>
    </source>
</evidence>
<evidence type="ECO:0000269" key="16">
    <source>
    </source>
</evidence>
<evidence type="ECO:0000269" key="17">
    <source>
    </source>
</evidence>
<evidence type="ECO:0000269" key="18">
    <source>
    </source>
</evidence>
<evidence type="ECO:0000269" key="19">
    <source>
    </source>
</evidence>
<evidence type="ECO:0000269" key="20">
    <source>
    </source>
</evidence>
<evidence type="ECO:0000269" key="21">
    <source>
    </source>
</evidence>
<evidence type="ECO:0000269" key="22">
    <source>
    </source>
</evidence>
<evidence type="ECO:0000269" key="23">
    <source>
    </source>
</evidence>
<evidence type="ECO:0000269" key="24">
    <source>
    </source>
</evidence>
<evidence type="ECO:0000303" key="25">
    <source>
    </source>
</evidence>
<evidence type="ECO:0000303" key="26">
    <source>
    </source>
</evidence>
<evidence type="ECO:0000305" key="27"/>
<evidence type="ECO:0007744" key="28">
    <source>
        <dbReference type="PDB" id="1Y9R"/>
    </source>
</evidence>
<evidence type="ECO:0007744" key="29">
    <source>
        <dbReference type="PDB" id="1YA3"/>
    </source>
</evidence>
<evidence type="ECO:0007744" key="30">
    <source>
        <dbReference type="PDB" id="2AA2"/>
    </source>
</evidence>
<evidence type="ECO:0007744" key="31">
    <source>
        <dbReference type="PDB" id="2AA5"/>
    </source>
</evidence>
<evidence type="ECO:0007744" key="32">
    <source>
        <dbReference type="PDB" id="2AA6"/>
    </source>
</evidence>
<evidence type="ECO:0007744" key="33">
    <source>
        <dbReference type="PDB" id="2AA7"/>
    </source>
</evidence>
<evidence type="ECO:0007744" key="34">
    <source>
        <dbReference type="PDB" id="2AAX"/>
    </source>
</evidence>
<evidence type="ECO:0007744" key="35">
    <source>
        <dbReference type="PDB" id="2AB2"/>
    </source>
</evidence>
<evidence type="ECO:0007744" key="36">
    <source>
        <dbReference type="PDB" id="4TNT"/>
    </source>
</evidence>
<evidence type="ECO:0007829" key="37">
    <source>
        <dbReference type="PDB" id="3VHV"/>
    </source>
</evidence>
<evidence type="ECO:0007829" key="38">
    <source>
        <dbReference type="PDB" id="4PF3"/>
    </source>
</evidence>
<evidence type="ECO:0007829" key="39">
    <source>
        <dbReference type="PDB" id="4TNT"/>
    </source>
</evidence>
<evidence type="ECO:0007829" key="40">
    <source>
        <dbReference type="PDB" id="4UDB"/>
    </source>
</evidence>
<accession>P08235</accession>
<accession>B0ZBF5</accession>
<accession>B0ZBF7</accession>
<accession>Q2NKL1</accession>
<accession>Q96KQ8</accession>
<accession>Q96KQ9</accession>
<name>MCR_HUMAN</name>
<gene>
    <name type="primary">NR3C2</name>
    <name type="synonym">MCR</name>
    <name type="synonym">MLR</name>
</gene>
<organism>
    <name type="scientific">Homo sapiens</name>
    <name type="common">Human</name>
    <dbReference type="NCBI Taxonomy" id="9606"/>
    <lineage>
        <taxon>Eukaryota</taxon>
        <taxon>Metazoa</taxon>
        <taxon>Chordata</taxon>
        <taxon>Craniata</taxon>
        <taxon>Vertebrata</taxon>
        <taxon>Euteleostomi</taxon>
        <taxon>Mammalia</taxon>
        <taxon>Eutheria</taxon>
        <taxon>Euarchontoglires</taxon>
        <taxon>Primates</taxon>
        <taxon>Haplorrhini</taxon>
        <taxon>Catarrhini</taxon>
        <taxon>Hominidae</taxon>
        <taxon>Homo</taxon>
    </lineage>
</organism>